<sequence length="561" mass="61195">MEDLTKNIIFTNAINGQPATIQYQTADGTILKQPKIEGQKTEQQPTFYYTTNGNGGTVNLAQLATTDDNKTCYIAQPVGGYNYALVNGMPLNQGAALGIATVDAQGRIQIVNQNKPIAANTISNISFKCDVCSDMFPHLALLNAHKRMHTDGEQQQQQQHNAQAGGDSIAVVSAQGLVQAQNIIGNGQMGQIQIVSSDTLEPVQQSVMQQQQHESKASKCINCGSSMLQQSKRKGPKQVRCESCMQAEQTAQQQQQLFVAQDGQMAHPVQIISTTPQAQAQLQQIVAAQTGGTTPKREASSGSGHHPVKKRNSQQMTKCQKCNGSGVVLVGQHSHASHSGVGGSVKQSVTVKTENPSKPFSCNICGGLFSRYSSLWSHKKLHSGEKNYKCSICGLAFAKAVYLKNHARIHTGEKPYKCQTCGMQFSQSPHLKNHERTHSGERPYVCGVCDKGFARHATLWNHRRIHTGEKPYKCEICGSAFSQAAHLKNHAKVHSGEKPYKCEICSAAFADRFALKRHRGIHQKYGQTAPRQTSSDGMIVHKQEIPDMEDEAQQEVIIGGL</sequence>
<evidence type="ECO:0000255" key="1">
    <source>
        <dbReference type="PROSITE-ProRule" id="PRU00042"/>
    </source>
</evidence>
<evidence type="ECO:0000256" key="2">
    <source>
        <dbReference type="SAM" id="MobiDB-lite"/>
    </source>
</evidence>
<evidence type="ECO:0000269" key="3">
    <source>
    </source>
</evidence>
<evidence type="ECO:0000269" key="4">
    <source>
    </source>
</evidence>
<evidence type="ECO:0000269" key="5">
    <source>
    </source>
</evidence>
<evidence type="ECO:0000269" key="6">
    <source>
    </source>
</evidence>
<evidence type="ECO:0000269" key="7">
    <source>
    </source>
</evidence>
<evidence type="ECO:0000269" key="8">
    <source>
    </source>
</evidence>
<evidence type="ECO:0000269" key="9">
    <source>
    </source>
</evidence>
<evidence type="ECO:0000269" key="10">
    <source>
    </source>
</evidence>
<evidence type="ECO:0000269" key="11">
    <source>
    </source>
</evidence>
<evidence type="ECO:0000269" key="12">
    <source>
    </source>
</evidence>
<evidence type="ECO:0000269" key="13">
    <source>
    </source>
</evidence>
<evidence type="ECO:0000269" key="14">
    <source>
    </source>
</evidence>
<evidence type="ECO:0000269" key="15">
    <source>
    </source>
</evidence>
<evidence type="ECO:0000269" key="16">
    <source>
    </source>
</evidence>
<evidence type="ECO:0000303" key="17">
    <source>
    </source>
</evidence>
<evidence type="ECO:0000305" key="18"/>
<evidence type="ECO:0000312" key="19">
    <source>
        <dbReference type="FlyBase" id="FBgn0032979"/>
    </source>
</evidence>
<evidence type="ECO:0007744" key="20">
    <source>
        <dbReference type="PDB" id="7NF9"/>
    </source>
</evidence>
<evidence type="ECO:0007829" key="21">
    <source>
        <dbReference type="PDB" id="7NF9"/>
    </source>
</evidence>
<protein>
    <recommendedName>
        <fullName evidence="18">Transcription factor Clamp</fullName>
    </recommendedName>
    <alternativeName>
        <fullName evidence="17">Chromatin-linked adapter for MSL proteins</fullName>
    </alternativeName>
</protein>
<accession>Q9V9N4</accession>
<accession>Q8IGP5</accession>
<accession>Q961A1</accession>
<keyword id="KW-0002">3D-structure</keyword>
<keyword id="KW-0025">Alternative splicing</keyword>
<keyword id="KW-0158">Chromosome</keyword>
<keyword id="KW-0217">Developmental protein</keyword>
<keyword id="KW-0479">Metal-binding</keyword>
<keyword id="KW-0539">Nucleus</keyword>
<keyword id="KW-1185">Reference proteome</keyword>
<keyword id="KW-0677">Repeat</keyword>
<keyword id="KW-0804">Transcription</keyword>
<keyword id="KW-0805">Transcription regulation</keyword>
<keyword id="KW-0862">Zinc</keyword>
<keyword id="KW-0863">Zinc-finger</keyword>
<comment type="function">
    <text evidence="3 4 5 6 7 8 9 10 11 12 13 16">Transcription factor involved in X-chromosome dosage compensation in males, the process by which transcription of the single X chromosome in the male is elevated (PubMed:23873939, PubMed:27414415, PubMed:27995349, PubMed:31320325, PubMed:34187599, PubMed:37602401). Binds to the DNA sequence (GA)n (PubMed:27414415, PubMed:28838946, PubMed:29281702). Clamp-binding promotes nucleosome depletion and chromatin accessibility, thereby allowing access to other transcription factors (PubMed:28838946, PubMed:29077765, PubMed:34187599). Specifically binds to cis-acting elements on the X-chromosome named chromatin entry sites and promotes recruitment of the male-specific lethal (MSL) histone acetyltransferase complex, which associates with actively transcribed genes on the male X-chromosome to upregulate their expression (PubMed:23873939, PubMed:27414415, PubMed:31320325). Mechanistically, acts by promoting chromatin accessibility at chromatin entry sites, facilitating DNA-binding of msl-2, followed by MSL complex recruitment (PubMed:31320325, PubMed:37602401). In addition to dosage compensation, also involved in zygotic genome activation (ZGA), a critical event in early embryonic development during which the developmental control passes from maternally provided mRNAs to the expression of the zygotic genome after fertilization (PubMed:34342574, PubMed:34849887). Maternally-provided protein cooperates with Zelda (zld) to activate zygotic transcription by increasing chromatin accessibility at promoters of specific genes and facilitate zld occupancy at a subset of key embryonic promoters (PubMed:34342574). Also acts as an activator of gypsy chromatin insulator function by promoting binding of Cp190 to chromatin (PubMed:30718365).</text>
</comment>
<comment type="subunit">
    <text evidence="8 10 14 15 16">Homodimer (PubMed:35409222). Interacts with msl-2; promoting recruitment of the male-specific lethal (MSL) histone acetyltransferase complex to chromatin (PubMed:31320325, PubMed:35648444, PubMed:37602401). Interacts with Nelf-A (PubMed:29281702). Interacts with NELF-B (PubMed:29281702).</text>
</comment>
<comment type="interaction">
    <interactant intactId="EBI-167567">
        <id>Q9V9N4</id>
    </interactant>
    <interactant intactId="EBI-15107521">
        <id>Q86LC7</id>
        <label>Deaf1</label>
    </interactant>
    <organismsDiffer>false</organismsDiffer>
    <experiments>4</experiments>
</comment>
<comment type="interaction">
    <interactant intactId="EBI-167567">
        <id>Q9V9N4</id>
    </interactant>
    <interactant intactId="EBI-181544">
        <id>Q9W3V9</id>
        <label>Nf-YC</label>
    </interactant>
    <organismsDiffer>false</organismsDiffer>
    <experiments>4</experiments>
</comment>
<comment type="interaction">
    <interactant intactId="EBI-167567">
        <id>Q9V9N4</id>
    </interactant>
    <interactant intactId="EBI-116495">
        <id>Q8INR0</id>
        <label>stck</label>
    </interactant>
    <organismsDiffer>false</organismsDiffer>
    <experiments>4</experiments>
</comment>
<comment type="subcellular location">
    <subcellularLocation>
        <location evidence="3 9">Nucleus</location>
    </subcellularLocation>
    <subcellularLocation>
        <location evidence="3 4 5 9 10 16">Chromosome</location>
    </subcellularLocation>
    <text evidence="3 5">Enriched at X-chromosome MSL-response elements (MREs) compared with autosomal MREs (PubMed:23873939). On polytene chromosomes, localizes to many sites throughout the genomes of both males and females (PubMed:27995349).</text>
</comment>
<comment type="alternative products">
    <event type="alternative splicing"/>
    <isoform>
        <id>Q9V9N4-1</id>
        <name>A</name>
        <sequence type="displayed"/>
    </isoform>
    <isoform>
        <id>Q9V9N4-2</id>
        <name>B</name>
        <sequence type="described" ref="VSP_062078"/>
    </isoform>
</comment>
<comment type="developmental stage">
    <text evidence="12 13">Expressed both maternally and zygotically (PubMed:34342574, PubMed:34849887). Maternally-provided protein is involved in zygotic genome activation (ZGA) (PubMed:34342574, PubMed:34849887).</text>
</comment>
<comment type="disruption phenotype">
    <text evidence="5">Lethality; females die at the third instar larval stage, while almost all males die at earlier developmental stages.</text>
</comment>
<comment type="sequence caution" evidence="18">
    <conflict type="erroneous initiation">
        <sequence resource="EMBL-CDS" id="AAK93166"/>
    </conflict>
    <text>Truncated N-terminus.</text>
</comment>
<feature type="chain" id="PRO_0000459220" description="Transcription factor Clamp">
    <location>
        <begin position="1"/>
        <end position="561"/>
    </location>
</feature>
<feature type="zinc finger region" description="C2H2-type 1" evidence="1">
    <location>
        <begin position="127"/>
        <end position="149"/>
    </location>
</feature>
<feature type="zinc finger region" description="C2H2-type 2" evidence="1">
    <location>
        <begin position="360"/>
        <end position="382"/>
    </location>
</feature>
<feature type="zinc finger region" description="C2H2-type 3" evidence="1">
    <location>
        <begin position="388"/>
        <end position="410"/>
    </location>
</feature>
<feature type="zinc finger region" description="C2H2-type 4" evidence="1">
    <location>
        <begin position="416"/>
        <end position="438"/>
    </location>
</feature>
<feature type="zinc finger region" description="C2H2-type 5" evidence="1">
    <location>
        <begin position="444"/>
        <end position="466"/>
    </location>
</feature>
<feature type="zinc finger region" description="C2H2-type 6" evidence="1">
    <location>
        <begin position="472"/>
        <end position="494"/>
    </location>
</feature>
<feature type="zinc finger region" description="C2H2-type 7" evidence="1">
    <location>
        <begin position="500"/>
        <end position="522"/>
    </location>
</feature>
<feature type="region of interest" description="Disordered" evidence="2">
    <location>
        <begin position="290"/>
        <end position="315"/>
    </location>
</feature>
<feature type="binding site" evidence="15 20">
    <location>
        <position position="129"/>
    </location>
    <ligand>
        <name>Zn(2+)</name>
        <dbReference type="ChEBI" id="CHEBI:29105"/>
    </ligand>
</feature>
<feature type="binding site" evidence="15 20">
    <location>
        <position position="132"/>
    </location>
    <ligand>
        <name>Zn(2+)</name>
        <dbReference type="ChEBI" id="CHEBI:29105"/>
    </ligand>
</feature>
<feature type="binding site" evidence="15 20">
    <location>
        <position position="145"/>
    </location>
    <ligand>
        <name>Zn(2+)</name>
        <dbReference type="ChEBI" id="CHEBI:29105"/>
    </ligand>
</feature>
<feature type="binding site" evidence="15 20">
    <location>
        <position position="149"/>
    </location>
    <ligand>
        <name>Zn(2+)</name>
        <dbReference type="ChEBI" id="CHEBI:29105"/>
    </ligand>
</feature>
<feature type="splice variant" id="VSP_062078" description="In isoform B.">
    <original>E</original>
    <variation>ECLSCR</variation>
    <location>
        <position position="354"/>
    </location>
</feature>
<feature type="mutagenesis site" description="Impaired interaction with msl-2." evidence="15">
    <original>L</original>
    <variation>A</variation>
    <location>
        <position position="139"/>
    </location>
</feature>
<feature type="mutagenesis site" description="Abolished interaction with msl-2." evidence="15">
    <original>K</original>
    <variation>E</variation>
    <location>
        <position position="146"/>
    </location>
</feature>
<feature type="mutagenesis site" description="Does not affect interaction with msl-2." evidence="15">
    <original>R</original>
    <variation>E</variation>
    <location>
        <position position="147"/>
    </location>
</feature>
<feature type="strand" evidence="21">
    <location>
        <begin position="92"/>
        <end position="94"/>
    </location>
</feature>
<feature type="strand" evidence="21">
    <location>
        <begin position="96"/>
        <end position="98"/>
    </location>
</feature>
<feature type="strand" evidence="21">
    <location>
        <begin position="127"/>
        <end position="129"/>
    </location>
</feature>
<feature type="turn" evidence="21">
    <location>
        <begin position="130"/>
        <end position="133"/>
    </location>
</feature>
<feature type="strand" evidence="21">
    <location>
        <begin position="134"/>
        <end position="138"/>
    </location>
</feature>
<feature type="helix" evidence="21">
    <location>
        <begin position="139"/>
        <end position="149"/>
    </location>
</feature>
<organism>
    <name type="scientific">Drosophila melanogaster</name>
    <name type="common">Fruit fly</name>
    <dbReference type="NCBI Taxonomy" id="7227"/>
    <lineage>
        <taxon>Eukaryota</taxon>
        <taxon>Metazoa</taxon>
        <taxon>Ecdysozoa</taxon>
        <taxon>Arthropoda</taxon>
        <taxon>Hexapoda</taxon>
        <taxon>Insecta</taxon>
        <taxon>Pterygota</taxon>
        <taxon>Neoptera</taxon>
        <taxon>Endopterygota</taxon>
        <taxon>Diptera</taxon>
        <taxon>Brachycera</taxon>
        <taxon>Muscomorpha</taxon>
        <taxon>Ephydroidea</taxon>
        <taxon>Drosophilidae</taxon>
        <taxon>Drosophila</taxon>
        <taxon>Sophophora</taxon>
    </lineage>
</organism>
<dbReference type="EMBL" id="AE014134">
    <property type="protein sequence ID" value="AAF57252.1"/>
    <property type="molecule type" value="Genomic_DNA"/>
</dbReference>
<dbReference type="EMBL" id="AE014134">
    <property type="protein sequence ID" value="AAX52677.1"/>
    <property type="molecule type" value="Genomic_DNA"/>
</dbReference>
<dbReference type="EMBL" id="BT001676">
    <property type="protein sequence ID" value="AAN71431.1"/>
    <property type="molecule type" value="mRNA"/>
</dbReference>
<dbReference type="EMBL" id="BT001891">
    <property type="protein sequence ID" value="AAN71680.1"/>
    <property type="molecule type" value="mRNA"/>
</dbReference>
<dbReference type="EMBL" id="AY051742">
    <property type="protein sequence ID" value="AAK93166.1"/>
    <property type="status" value="ALT_INIT"/>
    <property type="molecule type" value="mRNA"/>
</dbReference>
<dbReference type="RefSeq" id="NP_001014498.1">
    <molecule id="Q9V9N4-2"/>
    <property type="nucleotide sequence ID" value="NM_001014498.3"/>
</dbReference>
<dbReference type="RefSeq" id="NP_610137.1">
    <molecule id="Q9V9N4-1"/>
    <property type="nucleotide sequence ID" value="NM_136293.4"/>
</dbReference>
<dbReference type="PDB" id="7NF9">
    <property type="method" value="NMR"/>
    <property type="chains" value="A=87-153"/>
</dbReference>
<dbReference type="PDBsum" id="7NF9"/>
<dbReference type="SMR" id="Q9V9N4"/>
<dbReference type="IntAct" id="Q9V9N4">
    <property type="interactions" value="41"/>
</dbReference>
<dbReference type="STRING" id="7227.FBpp0099821"/>
<dbReference type="PaxDb" id="7227-FBpp0099821"/>
<dbReference type="DNASU" id="35445"/>
<dbReference type="EnsemblMetazoa" id="FBtr0085964">
    <molecule id="Q9V9N4-1"/>
    <property type="protein sequence ID" value="FBpp0085317"/>
    <property type="gene ID" value="FBgn0032979"/>
</dbReference>
<dbReference type="EnsemblMetazoa" id="FBtr0100407">
    <molecule id="Q9V9N4-2"/>
    <property type="protein sequence ID" value="FBpp0099821"/>
    <property type="gene ID" value="FBgn0032979"/>
</dbReference>
<dbReference type="GeneID" id="35445"/>
<dbReference type="KEGG" id="dme:Dmel_CG1832"/>
<dbReference type="UCSC" id="CG1832-RA">
    <molecule id="Q9V9N4-1"/>
    <property type="organism name" value="d. melanogaster"/>
</dbReference>
<dbReference type="AGR" id="FB:FBgn0032979"/>
<dbReference type="CTD" id="35445"/>
<dbReference type="FlyBase" id="FBgn0032979">
    <property type="gene designation" value="Clamp"/>
</dbReference>
<dbReference type="VEuPathDB" id="VectorBase:FBgn0032979"/>
<dbReference type="eggNOG" id="KOG1721">
    <property type="taxonomic scope" value="Eukaryota"/>
</dbReference>
<dbReference type="HOGENOM" id="CLU_030997_0_0_1"/>
<dbReference type="InParanoid" id="Q8IGP5"/>
<dbReference type="OMA" id="HNQDGET"/>
<dbReference type="OrthoDB" id="3437960at2759"/>
<dbReference type="Reactome" id="R-DME-212436">
    <property type="pathway name" value="Generic Transcription Pathway"/>
</dbReference>
<dbReference type="Reactome" id="R-DME-9843940">
    <property type="pathway name" value="Regulation of endogenous retroelements by KRAB-ZFP proteins"/>
</dbReference>
<dbReference type="BioGRID-ORCS" id="35445">
    <property type="hits" value="0 hits in 1 CRISPR screen"/>
</dbReference>
<dbReference type="CD-CODE" id="5A480847">
    <property type="entry name" value="Insulator body"/>
</dbReference>
<dbReference type="GenomeRNAi" id="35445"/>
<dbReference type="PRO" id="PR:Q9V9N4"/>
<dbReference type="Proteomes" id="UP000000803">
    <property type="component" value="Chromosome 2L"/>
</dbReference>
<dbReference type="Bgee" id="FBgn0032979">
    <property type="expression patterns" value="Expressed in egg cell and 194 other cell types or tissues"/>
</dbReference>
<dbReference type="ExpressionAtlas" id="Q9V9N4">
    <property type="expression patterns" value="baseline and differential"/>
</dbReference>
<dbReference type="GO" id="GO:0000785">
    <property type="term" value="C:chromatin"/>
    <property type="evidence" value="ECO:0000314"/>
    <property type="project" value="UniProtKB"/>
</dbReference>
<dbReference type="GO" id="GO:0005694">
    <property type="term" value="C:chromosome"/>
    <property type="evidence" value="ECO:0000314"/>
    <property type="project" value="FlyBase"/>
</dbReference>
<dbReference type="GO" id="GO:0035363">
    <property type="term" value="C:histone locus body"/>
    <property type="evidence" value="ECO:0000314"/>
    <property type="project" value="FlyBase"/>
</dbReference>
<dbReference type="GO" id="GO:0005634">
    <property type="term" value="C:nucleus"/>
    <property type="evidence" value="ECO:0000314"/>
    <property type="project" value="FlyBase"/>
</dbReference>
<dbReference type="GO" id="GO:0003682">
    <property type="term" value="F:chromatin binding"/>
    <property type="evidence" value="ECO:0000314"/>
    <property type="project" value="FlyBase"/>
</dbReference>
<dbReference type="GO" id="GO:0140463">
    <property type="term" value="F:chromatin-protein adaptor activity"/>
    <property type="evidence" value="ECO:0000314"/>
    <property type="project" value="UniProtKB"/>
</dbReference>
<dbReference type="GO" id="GO:0003677">
    <property type="term" value="F:DNA binding"/>
    <property type="evidence" value="ECO:0000314"/>
    <property type="project" value="FlyBase"/>
</dbReference>
<dbReference type="GO" id="GO:0001228">
    <property type="term" value="F:DNA-binding transcription activator activity, RNA polymerase II-specific"/>
    <property type="evidence" value="ECO:0000315"/>
    <property type="project" value="FlyBase"/>
</dbReference>
<dbReference type="GO" id="GO:0000981">
    <property type="term" value="F:DNA-binding transcription factor activity, RNA polymerase II-specific"/>
    <property type="evidence" value="ECO:0000314"/>
    <property type="project" value="UniProtKB"/>
</dbReference>
<dbReference type="GO" id="GO:0000977">
    <property type="term" value="F:RNA polymerase II transcription regulatory region sequence-specific DNA binding"/>
    <property type="evidence" value="ECO:0000314"/>
    <property type="project" value="UniProtKB"/>
</dbReference>
<dbReference type="GO" id="GO:0008270">
    <property type="term" value="F:zinc ion binding"/>
    <property type="evidence" value="ECO:0007669"/>
    <property type="project" value="UniProtKB-KW"/>
</dbReference>
<dbReference type="GO" id="GO:0006338">
    <property type="term" value="P:chromatin remodeling"/>
    <property type="evidence" value="ECO:0000314"/>
    <property type="project" value="UniProtKB"/>
</dbReference>
<dbReference type="GO" id="GO:0009047">
    <property type="term" value="P:dosage compensation by hyperactivation of X chromosome"/>
    <property type="evidence" value="ECO:0000314"/>
    <property type="project" value="UniProtKB"/>
</dbReference>
<dbReference type="GO" id="GO:0160021">
    <property type="term" value="P:maternal-to-zygotic transition of gene expression"/>
    <property type="evidence" value="ECO:0000314"/>
    <property type="project" value="UniProtKB"/>
</dbReference>
<dbReference type="GO" id="GO:0045944">
    <property type="term" value="P:positive regulation of transcription by RNA polymerase II"/>
    <property type="evidence" value="ECO:0000314"/>
    <property type="project" value="FlyBase"/>
</dbReference>
<dbReference type="GO" id="GO:0010468">
    <property type="term" value="P:regulation of gene expression"/>
    <property type="evidence" value="ECO:0000315"/>
    <property type="project" value="FlyBase"/>
</dbReference>
<dbReference type="FunFam" id="3.30.160.60:FF:000512">
    <property type="entry name" value="zinc finger protein 197 isoform X1"/>
    <property type="match status" value="1"/>
</dbReference>
<dbReference type="FunFam" id="3.30.160.60:FF:000688">
    <property type="entry name" value="zinc finger protein 197 isoform X1"/>
    <property type="match status" value="1"/>
</dbReference>
<dbReference type="FunFam" id="3.30.160.60:FF:001158">
    <property type="entry name" value="zinc finger protein 22"/>
    <property type="match status" value="1"/>
</dbReference>
<dbReference type="FunFam" id="3.30.160.60:FF:002343">
    <property type="entry name" value="Zinc finger protein 33A"/>
    <property type="match status" value="1"/>
</dbReference>
<dbReference type="FunFam" id="3.30.160.60:FF:000690">
    <property type="entry name" value="Zinc finger protein 354C"/>
    <property type="match status" value="1"/>
</dbReference>
<dbReference type="FunFam" id="3.30.160.60:FF:002467">
    <property type="entry name" value="Zinc finger protein 51"/>
    <property type="match status" value="1"/>
</dbReference>
<dbReference type="Gene3D" id="3.30.160.60">
    <property type="entry name" value="Classic Zinc Finger"/>
    <property type="match status" value="7"/>
</dbReference>
<dbReference type="InterPro" id="IPR036236">
    <property type="entry name" value="Znf_C2H2_sf"/>
</dbReference>
<dbReference type="InterPro" id="IPR013087">
    <property type="entry name" value="Znf_C2H2_type"/>
</dbReference>
<dbReference type="PANTHER" id="PTHR23226:SF416">
    <property type="entry name" value="FI01424P"/>
    <property type="match status" value="1"/>
</dbReference>
<dbReference type="PANTHER" id="PTHR23226">
    <property type="entry name" value="ZINC FINGER AND SCAN DOMAIN-CONTAINING"/>
    <property type="match status" value="1"/>
</dbReference>
<dbReference type="Pfam" id="PF00096">
    <property type="entry name" value="zf-C2H2"/>
    <property type="match status" value="6"/>
</dbReference>
<dbReference type="SMART" id="SM00355">
    <property type="entry name" value="ZnF_C2H2"/>
    <property type="match status" value="7"/>
</dbReference>
<dbReference type="SUPFAM" id="SSF57667">
    <property type="entry name" value="beta-beta-alpha zinc fingers"/>
    <property type="match status" value="5"/>
</dbReference>
<dbReference type="PROSITE" id="PS00028">
    <property type="entry name" value="ZINC_FINGER_C2H2_1"/>
    <property type="match status" value="7"/>
</dbReference>
<dbReference type="PROSITE" id="PS50157">
    <property type="entry name" value="ZINC_FINGER_C2H2_2"/>
    <property type="match status" value="7"/>
</dbReference>
<reference key="1">
    <citation type="journal article" date="2000" name="Science">
        <title>The genome sequence of Drosophila melanogaster.</title>
        <authorList>
            <person name="Adams M.D."/>
            <person name="Celniker S.E."/>
            <person name="Holt R.A."/>
            <person name="Evans C.A."/>
            <person name="Gocayne J.D."/>
            <person name="Amanatides P.G."/>
            <person name="Scherer S.E."/>
            <person name="Li P.W."/>
            <person name="Hoskins R.A."/>
            <person name="Galle R.F."/>
            <person name="George R.A."/>
            <person name="Lewis S.E."/>
            <person name="Richards S."/>
            <person name="Ashburner M."/>
            <person name="Henderson S.N."/>
            <person name="Sutton G.G."/>
            <person name="Wortman J.R."/>
            <person name="Yandell M.D."/>
            <person name="Zhang Q."/>
            <person name="Chen L.X."/>
            <person name="Brandon R.C."/>
            <person name="Rogers Y.-H.C."/>
            <person name="Blazej R.G."/>
            <person name="Champe M."/>
            <person name="Pfeiffer B.D."/>
            <person name="Wan K.H."/>
            <person name="Doyle C."/>
            <person name="Baxter E.G."/>
            <person name="Helt G."/>
            <person name="Nelson C.R."/>
            <person name="Miklos G.L.G."/>
            <person name="Abril J.F."/>
            <person name="Agbayani A."/>
            <person name="An H.-J."/>
            <person name="Andrews-Pfannkoch C."/>
            <person name="Baldwin D."/>
            <person name="Ballew R.M."/>
            <person name="Basu A."/>
            <person name="Baxendale J."/>
            <person name="Bayraktaroglu L."/>
            <person name="Beasley E.M."/>
            <person name="Beeson K.Y."/>
            <person name="Benos P.V."/>
            <person name="Berman B.P."/>
            <person name="Bhandari D."/>
            <person name="Bolshakov S."/>
            <person name="Borkova D."/>
            <person name="Botchan M.R."/>
            <person name="Bouck J."/>
            <person name="Brokstein P."/>
            <person name="Brottier P."/>
            <person name="Burtis K.C."/>
            <person name="Busam D.A."/>
            <person name="Butler H."/>
            <person name="Cadieu E."/>
            <person name="Center A."/>
            <person name="Chandra I."/>
            <person name="Cherry J.M."/>
            <person name="Cawley S."/>
            <person name="Dahlke C."/>
            <person name="Davenport L.B."/>
            <person name="Davies P."/>
            <person name="de Pablos B."/>
            <person name="Delcher A."/>
            <person name="Deng Z."/>
            <person name="Mays A.D."/>
            <person name="Dew I."/>
            <person name="Dietz S.M."/>
            <person name="Dodson K."/>
            <person name="Doup L.E."/>
            <person name="Downes M."/>
            <person name="Dugan-Rocha S."/>
            <person name="Dunkov B.C."/>
            <person name="Dunn P."/>
            <person name="Durbin K.J."/>
            <person name="Evangelista C.C."/>
            <person name="Ferraz C."/>
            <person name="Ferriera S."/>
            <person name="Fleischmann W."/>
            <person name="Fosler C."/>
            <person name="Gabrielian A.E."/>
            <person name="Garg N.S."/>
            <person name="Gelbart W.M."/>
            <person name="Glasser K."/>
            <person name="Glodek A."/>
            <person name="Gong F."/>
            <person name="Gorrell J.H."/>
            <person name="Gu Z."/>
            <person name="Guan P."/>
            <person name="Harris M."/>
            <person name="Harris N.L."/>
            <person name="Harvey D.A."/>
            <person name="Heiman T.J."/>
            <person name="Hernandez J.R."/>
            <person name="Houck J."/>
            <person name="Hostin D."/>
            <person name="Houston K.A."/>
            <person name="Howland T.J."/>
            <person name="Wei M.-H."/>
            <person name="Ibegwam C."/>
            <person name="Jalali M."/>
            <person name="Kalush F."/>
            <person name="Karpen G.H."/>
            <person name="Ke Z."/>
            <person name="Kennison J.A."/>
            <person name="Ketchum K.A."/>
            <person name="Kimmel B.E."/>
            <person name="Kodira C.D."/>
            <person name="Kraft C.L."/>
            <person name="Kravitz S."/>
            <person name="Kulp D."/>
            <person name="Lai Z."/>
            <person name="Lasko P."/>
            <person name="Lei Y."/>
            <person name="Levitsky A.A."/>
            <person name="Li J.H."/>
            <person name="Li Z."/>
            <person name="Liang Y."/>
            <person name="Lin X."/>
            <person name="Liu X."/>
            <person name="Mattei B."/>
            <person name="McIntosh T.C."/>
            <person name="McLeod M.P."/>
            <person name="McPherson D."/>
            <person name="Merkulov G."/>
            <person name="Milshina N.V."/>
            <person name="Mobarry C."/>
            <person name="Morris J."/>
            <person name="Moshrefi A."/>
            <person name="Mount S.M."/>
            <person name="Moy M."/>
            <person name="Murphy B."/>
            <person name="Murphy L."/>
            <person name="Muzny D.M."/>
            <person name="Nelson D.L."/>
            <person name="Nelson D.R."/>
            <person name="Nelson K.A."/>
            <person name="Nixon K."/>
            <person name="Nusskern D.R."/>
            <person name="Pacleb J.M."/>
            <person name="Palazzolo M."/>
            <person name="Pittman G.S."/>
            <person name="Pan S."/>
            <person name="Pollard J."/>
            <person name="Puri V."/>
            <person name="Reese M.G."/>
            <person name="Reinert K."/>
            <person name="Remington K."/>
            <person name="Saunders R.D.C."/>
            <person name="Scheeler F."/>
            <person name="Shen H."/>
            <person name="Shue B.C."/>
            <person name="Siden-Kiamos I."/>
            <person name="Simpson M."/>
            <person name="Skupski M.P."/>
            <person name="Smith T.J."/>
            <person name="Spier E."/>
            <person name="Spradling A.C."/>
            <person name="Stapleton M."/>
            <person name="Strong R."/>
            <person name="Sun E."/>
            <person name="Svirskas R."/>
            <person name="Tector C."/>
            <person name="Turner R."/>
            <person name="Venter E."/>
            <person name="Wang A.H."/>
            <person name="Wang X."/>
            <person name="Wang Z.-Y."/>
            <person name="Wassarman D.A."/>
            <person name="Weinstock G.M."/>
            <person name="Weissenbach J."/>
            <person name="Williams S.M."/>
            <person name="Woodage T."/>
            <person name="Worley K.C."/>
            <person name="Wu D."/>
            <person name="Yang S."/>
            <person name="Yao Q.A."/>
            <person name="Ye J."/>
            <person name="Yeh R.-F."/>
            <person name="Zaveri J.S."/>
            <person name="Zhan M."/>
            <person name="Zhang G."/>
            <person name="Zhao Q."/>
            <person name="Zheng L."/>
            <person name="Zheng X.H."/>
            <person name="Zhong F.N."/>
            <person name="Zhong W."/>
            <person name="Zhou X."/>
            <person name="Zhu S.C."/>
            <person name="Zhu X."/>
            <person name="Smith H.O."/>
            <person name="Gibbs R.A."/>
            <person name="Myers E.W."/>
            <person name="Rubin G.M."/>
            <person name="Venter J.C."/>
        </authorList>
    </citation>
    <scope>NUCLEOTIDE SEQUENCE [LARGE SCALE GENOMIC DNA]</scope>
    <source>
        <strain>Berkeley</strain>
    </source>
</reference>
<reference key="2">
    <citation type="journal article" date="2002" name="Genome Biol.">
        <title>Annotation of the Drosophila melanogaster euchromatic genome: a systematic review.</title>
        <authorList>
            <person name="Misra S."/>
            <person name="Crosby M.A."/>
            <person name="Mungall C.J."/>
            <person name="Matthews B.B."/>
            <person name="Campbell K.S."/>
            <person name="Hradecky P."/>
            <person name="Huang Y."/>
            <person name="Kaminker J.S."/>
            <person name="Millburn G.H."/>
            <person name="Prochnik S.E."/>
            <person name="Smith C.D."/>
            <person name="Tupy J.L."/>
            <person name="Whitfield E.J."/>
            <person name="Bayraktaroglu L."/>
            <person name="Berman B.P."/>
            <person name="Bettencourt B.R."/>
            <person name="Celniker S.E."/>
            <person name="de Grey A.D.N.J."/>
            <person name="Drysdale R.A."/>
            <person name="Harris N.L."/>
            <person name="Richter J."/>
            <person name="Russo S."/>
            <person name="Schroeder A.J."/>
            <person name="Shu S.Q."/>
            <person name="Stapleton M."/>
            <person name="Yamada C."/>
            <person name="Ashburner M."/>
            <person name="Gelbart W.M."/>
            <person name="Rubin G.M."/>
            <person name="Lewis S.E."/>
        </authorList>
    </citation>
    <scope>GENOME REANNOTATION</scope>
    <source>
        <strain>Berkeley</strain>
    </source>
</reference>
<reference key="3">
    <citation type="submission" date="2022-11" db="EMBL/GenBank/DDBJ databases">
        <title>Drosophila melanogaster release 4 sequence.</title>
        <authorList>
            <consortium name="Berkeley Drosophila Genome Project"/>
            <person name="Celniker S."/>
            <person name="Carlson J."/>
            <person name="Wan K."/>
            <person name="Pfeiffer B."/>
            <person name="Frise E."/>
            <person name="George R."/>
            <person name="Hoskins R."/>
            <person name="Stapleton M."/>
            <person name="Pacleb J."/>
            <person name="Park S."/>
            <person name="Svirskas R."/>
            <person name="Smith E."/>
            <person name="Yu C."/>
            <person name="Rubin G."/>
        </authorList>
    </citation>
    <scope>NUCLEOTIDE SEQUENCE [LARGE SCALE MRNA] (ISOFORMS A AND B)</scope>
    <source>
        <strain>Berkeley</strain>
        <tissue>Embryo</tissue>
    </source>
</reference>
<reference key="4">
    <citation type="journal article" date="2002" name="Genome Biol.">
        <title>A Drosophila full-length cDNA resource.</title>
        <authorList>
            <person name="Stapleton M."/>
            <person name="Carlson J.W."/>
            <person name="Brokstein P."/>
            <person name="Yu C."/>
            <person name="Champe M."/>
            <person name="George R.A."/>
            <person name="Guarin H."/>
            <person name="Kronmiller B."/>
            <person name="Pacleb J.M."/>
            <person name="Park S."/>
            <person name="Wan K.H."/>
            <person name="Rubin G.M."/>
            <person name="Celniker S.E."/>
        </authorList>
    </citation>
    <scope>NUCLEOTIDE SEQUENCE [LARGE SCALE MRNA] OF 45-561</scope>
    <source>
        <strain>Berkeley</strain>
        <tissue>Embryo</tissue>
    </source>
</reference>
<reference key="5">
    <citation type="journal article" date="2013" name="Genes Dev.">
        <title>The CLAMP protein links the MSL complex to the X chromosome during Drosophila dosage compensation.</title>
        <authorList>
            <person name="Soruco M.M."/>
            <person name="Chery J."/>
            <person name="Bishop E.P."/>
            <person name="Siggers T."/>
            <person name="Tolstorukov M.Y."/>
            <person name="Leydon A.R."/>
            <person name="Sugden A.U."/>
            <person name="Goebel K."/>
            <person name="Feng J."/>
            <person name="Xia P."/>
            <person name="Vedenko A."/>
            <person name="Bulyk M.L."/>
            <person name="Park P.J."/>
            <person name="Larschan E."/>
        </authorList>
    </citation>
    <scope>FUNCTION</scope>
    <scope>SUBCELLULAR LOCATION</scope>
</reference>
<reference key="6">
    <citation type="journal article" date="2016" name="PLoS Genet.">
        <title>Expansion of GA dinucleotide repeats increases the density of CLAMP binding sites on the X-chromosome to promote Drosophila dosage compensation.</title>
        <authorList>
            <person name="Kuzu G."/>
            <person name="Kaye E.G."/>
            <person name="Chery J."/>
            <person name="Siggers T."/>
            <person name="Yang L."/>
            <person name="Dobson J.R."/>
            <person name="Boor S."/>
            <person name="Bliss J."/>
            <person name="Liu W."/>
            <person name="Jogl G."/>
            <person name="Rohs R."/>
            <person name="Singh N.D."/>
            <person name="Bulyk M.L."/>
            <person name="Tolstorukov M.Y."/>
            <person name="Larschan E."/>
        </authorList>
    </citation>
    <scope>FUNCTION</scope>
    <scope>SUBCELLULAR LOCATION</scope>
</reference>
<reference key="7">
    <citation type="journal article" date="2017" name="Chromosome Res.">
        <title>The essential Drosophila CLAMP protein differentially regulates non-coding roX RNAs in male and females.</title>
        <authorList>
            <person name="Urban J.A."/>
            <person name="Doherty C.A."/>
            <person name="Jordan W.T. III"/>
            <person name="Bliss J.E."/>
            <person name="Feng J."/>
            <person name="Soruco M.M."/>
            <person name="Rieder L.E."/>
            <person name="Tsiarli M.A."/>
            <person name="Larschan E.N."/>
        </authorList>
    </citation>
    <scope>FUNCTION</scope>
    <scope>SUBCELLULAR LOCATION</scope>
    <scope>DISRUPTION PHENOTYPE</scope>
</reference>
<reference key="8">
    <citation type="journal article" date="2017" name="Genes Dev.">
        <title>Histone locus regulation by the Drosophila dosage compensation adaptor protein CLAMP.</title>
        <authorList>
            <person name="Rieder L.E."/>
            <person name="Koreski K.P."/>
            <person name="Boltz K.A."/>
            <person name="Kuzu G."/>
            <person name="Urban J.A."/>
            <person name="Bowman S.K."/>
            <person name="Zeidman A."/>
            <person name="Jordan W.T. III"/>
            <person name="Tolstorukov M.Y."/>
            <person name="Marzluff W.F."/>
            <person name="Duronio R.J."/>
            <person name="Larschan E.N."/>
        </authorList>
    </citation>
    <scope>FUNCTION</scope>
</reference>
<reference key="9">
    <citation type="journal article" date="2017" name="PLoS ONE">
        <title>Enhanced chromatin accessibility of the dosage compensated Drosophila male X-chromosome requires the CLAMP zinc finger protein.</title>
        <authorList>
            <person name="Urban J."/>
            <person name="Kuzu G."/>
            <person name="Bowman S."/>
            <person name="Scruggs B."/>
            <person name="Henriques T."/>
            <person name="Kingston R."/>
            <person name="Adelman K."/>
            <person name="Tolstorukov M."/>
            <person name="Larschan E."/>
        </authorList>
    </citation>
    <scope>FUNCTION</scope>
</reference>
<reference key="10">
    <citation type="journal article" date="2017" name="PLoS ONE">
        <title>The Drosophila CLAMP protein associates with diverse proteins on chromatin.</title>
        <authorList>
            <person name="Urban J.A."/>
            <person name="Urban J.M."/>
            <person name="Kuzu G."/>
            <person name="Larschan E.N."/>
        </authorList>
    </citation>
    <scope>FUNCTION</scope>
    <scope>INTERACTION WITH NELF-A AND NELF-B</scope>
</reference>
<reference key="11">
    <citation type="journal article" date="2019" name="Development">
        <title>The simultaneous interaction of MSL2 with CLAMP and DNA provides redundancy in the initiation of dosage compensation in Drosophila males.</title>
        <authorList>
            <person name="Tikhonova E."/>
            <person name="Fedotova A."/>
            <person name="Bonchuk A."/>
            <person name="Mogila V."/>
            <person name="Larschan E.N."/>
            <person name="Georgiev P."/>
            <person name="Maksimenko O."/>
        </authorList>
    </citation>
    <scope>FUNCTION</scope>
    <scope>SUBCELLULAR LOCATION</scope>
    <scope>INTERACTION WITH MSL-2</scope>
</reference>
<reference key="12">
    <citation type="journal article" date="2019" name="J. Cell Sci.">
        <title>The zinc-finger protein CLAMP promotes gypsy chromatin insulator function in Drosophila.</title>
        <authorList>
            <person name="Bag I."/>
            <person name="Dale R.K."/>
            <person name="Palmer C."/>
            <person name="Lei E.P."/>
        </authorList>
    </citation>
    <scope>FUNCTION</scope>
    <scope>SUBCELLULAR LOCATION</scope>
</reference>
<reference key="13">
    <citation type="journal article" date="2021" name="Elife">
        <title>CLAMP and Zelda function together to promote Drosophila zygotic genome activation.</title>
        <authorList>
            <person name="Duan J."/>
            <person name="Rieder L."/>
            <person name="Colonnetta M.M."/>
            <person name="Huang A."/>
            <person name="Mckenney M."/>
            <person name="Watters S."/>
            <person name="Deshpande G."/>
            <person name="Jordan W."/>
            <person name="Fawzi N."/>
            <person name="Larschan E."/>
        </authorList>
    </citation>
    <scope>FUNCTION</scope>
    <scope>DEVELOPMENTAL STAGE</scope>
</reference>
<reference key="14">
    <citation type="journal article" date="2021" name="Epigenetics Chromatin">
        <title>The zinc finger protein CLAMP promotes long-range chromatin interactions that mediate dosage compensation of the Drosophila male X-chromosome.</title>
        <authorList>
            <person name="Jordan W. III"/>
            <person name="Larschan E."/>
        </authorList>
    </citation>
    <scope>FUNCTION</scope>
</reference>
<reference key="15">
    <citation type="journal article" date="2021" name="Genetics">
        <title>CLAMP regulates zygotic genome activation in Drosophila embryos.</title>
        <authorList>
            <person name="Colonnetta M.M."/>
            <person name="Abrahante J.E."/>
            <person name="Schedl P."/>
            <person name="Gohl D.M."/>
            <person name="Deshpande G."/>
        </authorList>
    </citation>
    <scope>FUNCTION</scope>
    <scope>DEVELOPMENTAL STAGE</scope>
</reference>
<reference key="16">
    <citation type="journal article" date="2022" name="Int. J. Mol. Sci.">
        <title>Dimerization activity of a disordered N-terminal domain from Drosophila CLAMP protein.</title>
        <authorList>
            <person name="Tikhonova E."/>
            <person name="Mariasina S."/>
            <person name="Arkova O."/>
            <person name="Maksimenko O."/>
            <person name="Georgiev P."/>
            <person name="Bonchuk A."/>
        </authorList>
    </citation>
    <scope>SUBUNIT</scope>
</reference>
<reference key="17">
    <citation type="journal article" date="2023" name="Nucleic Acids Res.">
        <title>Physical interaction between MSL2 and CLAMP assures direct cooperativity and prevents competition at composite binding sites.</title>
        <authorList>
            <person name="Eggers N."/>
            <person name="Gkountromichos F."/>
            <person name="Krause S."/>
            <person name="Campos-Sparr A."/>
            <person name="Becker P.B."/>
        </authorList>
    </citation>
    <scope>FUNCTION</scope>
    <scope>SUBCELLULAR LOCATION</scope>
    <scope>INTERACTION WITH MSL-2</scope>
</reference>
<reference evidence="20" key="18">
    <citation type="journal article" date="2022" name="Nucleic Acids Res.">
        <title>Structural basis for interaction between CLAMP and MSL2 proteins involved in the specific recruitment of the dosage compensation complex in Drosophila.</title>
        <authorList>
            <person name="Tikhonova E."/>
            <person name="Mariasina S."/>
            <person name="Efimov S."/>
            <person name="Polshakov V."/>
            <person name="Maksimenko O."/>
            <person name="Georgiev P."/>
            <person name="Bonchuk A."/>
        </authorList>
    </citation>
    <scope>STRUCTURE BY NMR OF 87-153 IN COMPLEX WITH ZINC</scope>
    <scope>INTERACTION WITH MSL-2</scope>
    <scope>MUTAGENESIS OF LEU-139; LYS-146 AND ARG-147</scope>
</reference>
<gene>
    <name evidence="17 19" type="primary">Clamp</name>
    <name evidence="19" type="ORF">CG1832</name>
</gene>
<proteinExistence type="evidence at protein level"/>
<name>CLAMP_DROME</name>